<keyword id="KW-0017">Alkaloid metabolism</keyword>
<keyword id="KW-0963">Cytoplasm</keyword>
<keyword id="KW-0903">Direct protein sequencing</keyword>
<keyword id="KW-0479">Metal-binding</keyword>
<keyword id="KW-0521">NADP</keyword>
<keyword id="KW-0560">Oxidoreductase</keyword>
<keyword id="KW-0862">Zinc</keyword>
<protein>
    <recommendedName>
        <fullName evidence="9">Vomilenine reductase</fullName>
        <shortName evidence="9">RsVR</shortName>
        <ecNumber evidence="5 6">1.5.1.32</ecNumber>
    </recommendedName>
    <alternativeName>
        <fullName evidence="7">CAD2-homolog protein</fullName>
    </alternativeName>
    <alternativeName>
        <fullName evidence="7">Protein RR6-2</fullName>
        <shortName evidence="7">RsRR6-2</shortName>
    </alternativeName>
</protein>
<sequence>MAISPEVEHPNKAFGFAARDPSGLLSPFNFSRRATGEHDVQFKVLYCGICHSDLHMIKNEWGFTKYPIVPGHEIVGVVTEVGSKVEKFKVGDKVGVGCLVGSCRKCDMCSQDLENYCPDQILTYSATYTDGTTTYGGYSSLMVADEHFVIRWPENLPMDIGAPLLCAGITTYSPLRHFGLDKPGTHVGIVGLGGLGHVAVKFAKAFGAKVTVISTSEGKKQEAVEKLGADAFLVSRDPEQMQAAAATLDGIIDTVSAVHPILPLVNLLKSQGKLIMVGAPEKPIELPVFPLLLGRKIVAGSAIGGLKETQDMIDFAAKHNILPDVELIPMDYVNTAMERLLKADVKYRFVIDICNTLKSA</sequence>
<accession>P0DXJ3</accession>
<feature type="chain" id="PRO_0000462315" description="Vomilenine reductase">
    <location>
        <begin position="1"/>
        <end position="360"/>
    </location>
</feature>
<feature type="domain" description="Enoyl reductase (ER)" evidence="4">
    <location>
        <begin position="23"/>
        <end position="351"/>
    </location>
</feature>
<feature type="binding site" evidence="2">
    <location>
        <position position="50"/>
    </location>
    <ligand>
        <name>Zn(2+)</name>
        <dbReference type="ChEBI" id="CHEBI:29105"/>
        <label>1</label>
        <note>catalytic</note>
    </ligand>
</feature>
<feature type="binding site" evidence="2">
    <location>
        <position position="52"/>
    </location>
    <ligand>
        <name>an alcohol</name>
        <dbReference type="ChEBI" id="CHEBI:30879"/>
    </ligand>
</feature>
<feature type="binding site" evidence="2">
    <location>
        <position position="52"/>
    </location>
    <ligand>
        <name>NADP(+)</name>
        <dbReference type="ChEBI" id="CHEBI:58349"/>
    </ligand>
</feature>
<feature type="binding site" evidence="2">
    <location>
        <position position="53"/>
    </location>
    <ligand>
        <name>Zn(2+)</name>
        <dbReference type="ChEBI" id="CHEBI:29105"/>
        <label>1</label>
        <note>catalytic</note>
    </ligand>
</feature>
<feature type="binding site" evidence="1">
    <location>
        <position position="72"/>
    </location>
    <ligand>
        <name>an alcohol</name>
        <dbReference type="ChEBI" id="CHEBI:30879"/>
    </ligand>
</feature>
<feature type="binding site" evidence="2">
    <location>
        <position position="72"/>
    </location>
    <ligand>
        <name>Zn(2+)</name>
        <dbReference type="ChEBI" id="CHEBI:29105"/>
        <label>1</label>
        <note>catalytic</note>
    </ligand>
</feature>
<feature type="binding site" evidence="2">
    <location>
        <position position="73"/>
    </location>
    <ligand>
        <name>Zn(2+)</name>
        <dbReference type="ChEBI" id="CHEBI:29105"/>
        <label>1</label>
        <note>catalytic</note>
    </ligand>
</feature>
<feature type="binding site" evidence="2">
    <location>
        <position position="103"/>
    </location>
    <ligand>
        <name>Zn(2+)</name>
        <dbReference type="ChEBI" id="CHEBI:29105"/>
        <label>2</label>
    </ligand>
</feature>
<feature type="binding site" evidence="2">
    <location>
        <position position="106"/>
    </location>
    <ligand>
        <name>Zn(2+)</name>
        <dbReference type="ChEBI" id="CHEBI:29105"/>
        <label>2</label>
    </ligand>
</feature>
<feature type="binding site" evidence="2">
    <location>
        <position position="109"/>
    </location>
    <ligand>
        <name>Zn(2+)</name>
        <dbReference type="ChEBI" id="CHEBI:29105"/>
        <label>2</label>
    </ligand>
</feature>
<feature type="binding site" evidence="2">
    <location>
        <position position="117"/>
    </location>
    <ligand>
        <name>Zn(2+)</name>
        <dbReference type="ChEBI" id="CHEBI:29105"/>
        <label>2</label>
    </ligand>
</feature>
<feature type="binding site" evidence="2">
    <location>
        <position position="166"/>
    </location>
    <ligand>
        <name>Zn(2+)</name>
        <dbReference type="ChEBI" id="CHEBI:29105"/>
        <label>1</label>
        <note>catalytic</note>
    </ligand>
</feature>
<feature type="binding site" evidence="3">
    <location>
        <position position="192"/>
    </location>
    <ligand>
        <name>NADP(+)</name>
        <dbReference type="ChEBI" id="CHEBI:58349"/>
    </ligand>
</feature>
<feature type="binding site" evidence="3">
    <location>
        <position position="194"/>
    </location>
    <ligand>
        <name>NADP(+)</name>
        <dbReference type="ChEBI" id="CHEBI:58349"/>
    </ligand>
</feature>
<feature type="binding site" evidence="3">
    <location>
        <position position="195"/>
    </location>
    <ligand>
        <name>NADP(+)</name>
        <dbReference type="ChEBI" id="CHEBI:58349"/>
    </ligand>
</feature>
<feature type="binding site" evidence="3">
    <location>
        <position position="214"/>
    </location>
    <ligand>
        <name>NADP(+)</name>
        <dbReference type="ChEBI" id="CHEBI:58349"/>
    </ligand>
</feature>
<feature type="binding site" evidence="3">
    <location>
        <position position="215"/>
    </location>
    <ligand>
        <name>NADP(+)</name>
        <dbReference type="ChEBI" id="CHEBI:58349"/>
    </ligand>
</feature>
<feature type="binding site" evidence="3">
    <location>
        <position position="216"/>
    </location>
    <ligand>
        <name>NADP(+)</name>
        <dbReference type="ChEBI" id="CHEBI:58349"/>
    </ligand>
</feature>
<feature type="binding site" evidence="3">
    <location>
        <position position="219"/>
    </location>
    <ligand>
        <name>NADP(+)</name>
        <dbReference type="ChEBI" id="CHEBI:58349"/>
    </ligand>
</feature>
<feature type="binding site" evidence="2">
    <location>
        <position position="220"/>
    </location>
    <ligand>
        <name>NADP(+)</name>
        <dbReference type="ChEBI" id="CHEBI:58349"/>
    </ligand>
</feature>
<feature type="binding site" evidence="2">
    <location>
        <position position="277"/>
    </location>
    <ligand>
        <name>NADP(+)</name>
        <dbReference type="ChEBI" id="CHEBI:58349"/>
    </ligand>
</feature>
<feature type="binding site" evidence="2">
    <location>
        <position position="279"/>
    </location>
    <ligand>
        <name>NADP(+)</name>
        <dbReference type="ChEBI" id="CHEBI:58349"/>
    </ligand>
</feature>
<feature type="binding site" evidence="2">
    <location>
        <position position="301"/>
    </location>
    <ligand>
        <name>NADP(+)</name>
        <dbReference type="ChEBI" id="CHEBI:58349"/>
    </ligand>
</feature>
<feature type="binding site" evidence="2">
    <location>
        <position position="348"/>
    </location>
    <ligand>
        <name>NADP(+)</name>
        <dbReference type="ChEBI" id="CHEBI:58349"/>
    </ligand>
</feature>
<reference evidence="10" key="1">
    <citation type="journal article" date="2024" name="Nat. Commun.">
        <title>De novo biosynthesis of antiarrhythmic alkaloid ajmaline.</title>
        <authorList>
            <person name="Guo J."/>
            <person name="Gao D."/>
            <person name="Lian J."/>
            <person name="Qu Y."/>
        </authorList>
    </citation>
    <scope>NUCLEOTIDE SEQUENCE [MRNA]</scope>
    <scope>FUNCTION</scope>
    <scope>CATALYTIC ACTIVITY</scope>
    <scope>BIOPHYSICOCHEMICAL PROPERTIES</scope>
    <scope>PATHWAY</scope>
    <scope>TISSUE SPECIFICITY</scope>
    <scope>BIOTECHNOLOGY</scope>
</reference>
<reference key="2">
    <citation type="journal article" date="2016" name="Planta">
        <title>A novel cinnamyl alcohol dehydrogenase (CAD)-like reductase contributes to the structural diversity of monoterpenoid indole alkaloids in Rauvolfia.</title>
        <authorList>
            <person name="Geissler M."/>
            <person name="Burghard M."/>
            <person name="Volk J."/>
            <person name="Staniek A."/>
            <person name="Warzecha H."/>
        </authorList>
    </citation>
    <scope>PROTEIN SEQUENCE OF 43-53 AND 66-77</scope>
</reference>
<reference key="3">
    <citation type="journal article" date="2002" name="Bioorg. Med. Chem.">
        <title>Vomilenine reductase--a novel enzyme catalyzing a crucial step in the biosynthesis of the therapeutically applied antiarrhythmic alkaloid ajmaline.</title>
        <authorList>
            <person name="von Schumann G."/>
            <person name="Gao S."/>
            <person name="Stoeckigt J."/>
        </authorList>
    </citation>
    <scope>FUNCTION</scope>
    <scope>CATALYTIC ACTIVITY</scope>
    <scope>BIOPHYSICOCHEMICAL PROPERTIES</scope>
    <scope>PATHWAY</scope>
    <scope>ACTIVITY REGULATION</scope>
    <scope>TISSUE SPECIFICITY</scope>
</reference>
<comment type="function">
    <text evidence="5 6">Alcohol dehydrogenase involved in the biosynthesis of ajmaline-type monoterpenoid indole alkaloids (MIAs) natural products, important plant-derived pharmaceuticals used in the therapy of heart disorders (PubMed:11937349, PubMed:38212296). Catalyzes the conversion of vomilenine to 1,2-dihydrovomilenine, an intermediate chemical in the biosynthesis of ajmaline (PubMed:11937349, PubMed:38212296).</text>
</comment>
<comment type="catalytic activity">
    <reaction evidence="5 6">
        <text>(2R)-1,2-dihydrovomilenine + NADP(+) = vomilenine + NADPH + H(+)</text>
        <dbReference type="Rhea" id="RHEA:16409"/>
        <dbReference type="ChEBI" id="CHEBI:15378"/>
        <dbReference type="ChEBI" id="CHEBI:16408"/>
        <dbReference type="ChEBI" id="CHEBI:17372"/>
        <dbReference type="ChEBI" id="CHEBI:57783"/>
        <dbReference type="ChEBI" id="CHEBI:58349"/>
        <dbReference type="EC" id="1.5.1.32"/>
    </reaction>
    <physiologicalReaction direction="right-to-left" evidence="5 6">
        <dbReference type="Rhea" id="RHEA:16411"/>
    </physiologicalReaction>
</comment>
<comment type="cofactor">
    <cofactor evidence="2">
        <name>Zn(2+)</name>
        <dbReference type="ChEBI" id="CHEBI:29105"/>
    </cofactor>
    <text evidence="2">Binds 2 Zn(2+) ions per subunit.</text>
</comment>
<comment type="activity regulation">
    <text evidence="5">Inhibited by EDTA and p-hydroxymercuribenzoate, a sulfhydryl reagent.</text>
</comment>
<comment type="biophysicochemical properties">
    <kinetics>
        <KM evidence="6">41.6 uM for vomilenine</KM>
        <text evidence="6">kcat is 1.7 sec(-1) with vomilenine as substrate.</text>
    </kinetics>
    <phDependence>
        <text evidence="5">Optimum pH is 5.7-6.2.</text>
    </phDependence>
    <temperatureDependence>
        <text evidence="5">Optimum temperature is 30 degrees Celsius.</text>
    </temperatureDependence>
</comment>
<comment type="pathway">
    <text evidence="5 6">Alkaloid biosynthesis; ajmaline biosynthesis.</text>
</comment>
<comment type="subunit">
    <text evidence="2">Homodimer.</text>
</comment>
<comment type="subcellular location">
    <subcellularLocation>
        <location evidence="2">Cytoplasm</location>
    </subcellularLocation>
</comment>
<comment type="tissue specificity">
    <text evidence="6">Confined to roots.</text>
</comment>
<comment type="biotechnology">
    <text evidence="6">The strictosidine aglycone-producing AJM7-DeltaHYS yeast strain expressing pathway genes of the VOM module, RsGS, SBE (GsSBE, RsSBE1 or RsSBE2), RsPNAE, RsVS and RsVH, accumulates vomilenine (PubMed:38212296). Additionnal expression of pathway genes of the AJM module, RsVR, RsDHVR, AAE (RsAAE1 or RsAAE2) and RsNNMT, leads to the production of ajmaline (PubMed:38212296). Ajmaline is an anti-arrhythmic alkaloid commercially used as an efficient drug for the treatment of arrhythmic heart disorder (PubMed:38212296).</text>
</comment>
<comment type="similarity">
    <text evidence="8">Belongs to the zinc-containing alcohol dehydrogenase family. Class-P subfamily.</text>
</comment>
<dbReference type="EC" id="1.5.1.32" evidence="5 6"/>
<dbReference type="EMBL" id="OQ591891">
    <property type="protein sequence ID" value="WKU61927.1"/>
    <property type="molecule type" value="mRNA"/>
</dbReference>
<dbReference type="UniPathway" id="UPA00310"/>
<dbReference type="PROSITE" id="PS00059">
    <property type="entry name" value="ADH_ZINC"/>
    <property type="match status" value="1"/>
</dbReference>
<name>VOR1_RAUSE</name>
<gene>
    <name evidence="9" type="primary">VR</name>
    <name evidence="7" type="synonym">RR6-2</name>
</gene>
<organism>
    <name type="scientific">Rauvolfia serpentina</name>
    <name type="common">Serpentine wood</name>
    <name type="synonym">Ophioxylon serpentinum</name>
    <dbReference type="NCBI Taxonomy" id="4060"/>
    <lineage>
        <taxon>Eukaryota</taxon>
        <taxon>Viridiplantae</taxon>
        <taxon>Streptophyta</taxon>
        <taxon>Embryophyta</taxon>
        <taxon>Tracheophyta</taxon>
        <taxon>Spermatophyta</taxon>
        <taxon>Magnoliopsida</taxon>
        <taxon>eudicotyledons</taxon>
        <taxon>Gunneridae</taxon>
        <taxon>Pentapetalae</taxon>
        <taxon>asterids</taxon>
        <taxon>lamiids</taxon>
        <taxon>Gentianales</taxon>
        <taxon>Apocynaceae</taxon>
        <taxon>Rauvolfioideae</taxon>
        <taxon>Vinceae</taxon>
        <taxon>Rauvolfiinae</taxon>
        <taxon>Rauvolfia</taxon>
    </lineage>
</organism>
<proteinExistence type="evidence at protein level"/>
<evidence type="ECO:0000250" key="1">
    <source>
        <dbReference type="UniProtKB" id="P00327"/>
    </source>
</evidence>
<evidence type="ECO:0000250" key="2">
    <source>
        <dbReference type="UniProtKB" id="P06525"/>
    </source>
</evidence>
<evidence type="ECO:0000250" key="3">
    <source>
        <dbReference type="UniProtKB" id="W8JWW7"/>
    </source>
</evidence>
<evidence type="ECO:0000255" key="4"/>
<evidence type="ECO:0000269" key="5">
    <source>
    </source>
</evidence>
<evidence type="ECO:0000269" key="6">
    <source>
    </source>
</evidence>
<evidence type="ECO:0000303" key="7">
    <source>
    </source>
</evidence>
<evidence type="ECO:0000305" key="8"/>
<evidence type="ECO:0000305" key="9">
    <source>
    </source>
</evidence>
<evidence type="ECO:0000312" key="10">
    <source>
        <dbReference type="EMBL" id="WKU61927.1"/>
    </source>
</evidence>